<evidence type="ECO:0000255" key="1">
    <source>
        <dbReference type="HAMAP-Rule" id="MF_00268"/>
    </source>
</evidence>
<gene>
    <name evidence="1" type="primary">recA</name>
</gene>
<keyword id="KW-0067">ATP-binding</keyword>
<keyword id="KW-0963">Cytoplasm</keyword>
<keyword id="KW-0227">DNA damage</keyword>
<keyword id="KW-0233">DNA recombination</keyword>
<keyword id="KW-0234">DNA repair</keyword>
<keyword id="KW-0238">DNA-binding</keyword>
<keyword id="KW-0547">Nucleotide-binding</keyword>
<keyword id="KW-0742">SOS response</keyword>
<organism>
    <name type="scientific">Thermus thermophilus</name>
    <dbReference type="NCBI Taxonomy" id="274"/>
    <lineage>
        <taxon>Bacteria</taxon>
        <taxon>Thermotogati</taxon>
        <taxon>Deinococcota</taxon>
        <taxon>Deinococci</taxon>
        <taxon>Thermales</taxon>
        <taxon>Thermaceae</taxon>
        <taxon>Thermus</taxon>
    </lineage>
</organism>
<reference key="1">
    <citation type="journal article" date="1994" name="J. Biol. Chem.">
        <title>Cloning, sequencing, and expression of RecA proteins from three distantly related thermophilic eubacteria.</title>
        <authorList>
            <person name="Wetmur J.G."/>
            <person name="Wong D.M."/>
            <person name="Ortiz B."/>
            <person name="Tong J."/>
            <person name="Reichert F."/>
            <person name="Gelfand D.H."/>
        </authorList>
    </citation>
    <scope>NUCLEOTIDE SEQUENCE [GENOMIC DNA]</scope>
</reference>
<protein>
    <recommendedName>
        <fullName evidence="1">Protein RecA</fullName>
    </recommendedName>
    <alternativeName>
        <fullName evidence="1">Recombinase A</fullName>
    </alternativeName>
</protein>
<dbReference type="EMBL" id="U03058">
    <property type="protein sequence ID" value="AAA64935.1"/>
    <property type="molecule type" value="Genomic_DNA"/>
</dbReference>
<dbReference type="SMR" id="P61501"/>
<dbReference type="GO" id="GO:0005829">
    <property type="term" value="C:cytosol"/>
    <property type="evidence" value="ECO:0007669"/>
    <property type="project" value="TreeGrafter"/>
</dbReference>
<dbReference type="GO" id="GO:0005524">
    <property type="term" value="F:ATP binding"/>
    <property type="evidence" value="ECO:0007669"/>
    <property type="project" value="UniProtKB-UniRule"/>
</dbReference>
<dbReference type="GO" id="GO:0016887">
    <property type="term" value="F:ATP hydrolysis activity"/>
    <property type="evidence" value="ECO:0007669"/>
    <property type="project" value="InterPro"/>
</dbReference>
<dbReference type="GO" id="GO:0140664">
    <property type="term" value="F:ATP-dependent DNA damage sensor activity"/>
    <property type="evidence" value="ECO:0007669"/>
    <property type="project" value="InterPro"/>
</dbReference>
<dbReference type="GO" id="GO:0003684">
    <property type="term" value="F:damaged DNA binding"/>
    <property type="evidence" value="ECO:0007669"/>
    <property type="project" value="UniProtKB-UniRule"/>
</dbReference>
<dbReference type="GO" id="GO:0003697">
    <property type="term" value="F:single-stranded DNA binding"/>
    <property type="evidence" value="ECO:0007669"/>
    <property type="project" value="UniProtKB-UniRule"/>
</dbReference>
<dbReference type="GO" id="GO:0006310">
    <property type="term" value="P:DNA recombination"/>
    <property type="evidence" value="ECO:0007669"/>
    <property type="project" value="UniProtKB-UniRule"/>
</dbReference>
<dbReference type="GO" id="GO:0006281">
    <property type="term" value="P:DNA repair"/>
    <property type="evidence" value="ECO:0007669"/>
    <property type="project" value="UniProtKB-UniRule"/>
</dbReference>
<dbReference type="GO" id="GO:0009432">
    <property type="term" value="P:SOS response"/>
    <property type="evidence" value="ECO:0007669"/>
    <property type="project" value="UniProtKB-UniRule"/>
</dbReference>
<dbReference type="CDD" id="cd00983">
    <property type="entry name" value="RecA"/>
    <property type="match status" value="1"/>
</dbReference>
<dbReference type="FunFam" id="3.40.50.300:FF:000087">
    <property type="entry name" value="Recombinase RecA"/>
    <property type="match status" value="1"/>
</dbReference>
<dbReference type="Gene3D" id="3.40.50.300">
    <property type="entry name" value="P-loop containing nucleotide triphosphate hydrolases"/>
    <property type="match status" value="1"/>
</dbReference>
<dbReference type="HAMAP" id="MF_00268">
    <property type="entry name" value="RecA"/>
    <property type="match status" value="1"/>
</dbReference>
<dbReference type="InterPro" id="IPR003593">
    <property type="entry name" value="AAA+_ATPase"/>
</dbReference>
<dbReference type="InterPro" id="IPR013765">
    <property type="entry name" value="DNA_recomb/repair_RecA"/>
</dbReference>
<dbReference type="InterPro" id="IPR020584">
    <property type="entry name" value="DNA_recomb/repair_RecA_CS"/>
</dbReference>
<dbReference type="InterPro" id="IPR027417">
    <property type="entry name" value="P-loop_NTPase"/>
</dbReference>
<dbReference type="InterPro" id="IPR049261">
    <property type="entry name" value="RecA-like_C"/>
</dbReference>
<dbReference type="InterPro" id="IPR049428">
    <property type="entry name" value="RecA-like_N"/>
</dbReference>
<dbReference type="InterPro" id="IPR020588">
    <property type="entry name" value="RecA_ATP-bd"/>
</dbReference>
<dbReference type="InterPro" id="IPR023400">
    <property type="entry name" value="RecA_C_sf"/>
</dbReference>
<dbReference type="InterPro" id="IPR020587">
    <property type="entry name" value="RecA_monomer-monomer_interface"/>
</dbReference>
<dbReference type="NCBIfam" id="TIGR02012">
    <property type="entry name" value="tigrfam_recA"/>
    <property type="match status" value="1"/>
</dbReference>
<dbReference type="PANTHER" id="PTHR45900:SF1">
    <property type="entry name" value="MITOCHONDRIAL DNA REPAIR PROTEIN RECA HOMOLOG-RELATED"/>
    <property type="match status" value="1"/>
</dbReference>
<dbReference type="PANTHER" id="PTHR45900">
    <property type="entry name" value="RECA"/>
    <property type="match status" value="1"/>
</dbReference>
<dbReference type="Pfam" id="PF00154">
    <property type="entry name" value="RecA"/>
    <property type="match status" value="1"/>
</dbReference>
<dbReference type="Pfam" id="PF21096">
    <property type="entry name" value="RecA_C"/>
    <property type="match status" value="1"/>
</dbReference>
<dbReference type="PRINTS" id="PR00142">
    <property type="entry name" value="RECA"/>
</dbReference>
<dbReference type="SMART" id="SM00382">
    <property type="entry name" value="AAA"/>
    <property type="match status" value="1"/>
</dbReference>
<dbReference type="SUPFAM" id="SSF52540">
    <property type="entry name" value="P-loop containing nucleoside triphosphate hydrolases"/>
    <property type="match status" value="1"/>
</dbReference>
<dbReference type="SUPFAM" id="SSF54752">
    <property type="entry name" value="RecA protein, C-terminal domain"/>
    <property type="match status" value="1"/>
</dbReference>
<dbReference type="PROSITE" id="PS00321">
    <property type="entry name" value="RECA_1"/>
    <property type="match status" value="1"/>
</dbReference>
<dbReference type="PROSITE" id="PS50162">
    <property type="entry name" value="RECA_2"/>
    <property type="match status" value="1"/>
</dbReference>
<dbReference type="PROSITE" id="PS50163">
    <property type="entry name" value="RECA_3"/>
    <property type="match status" value="1"/>
</dbReference>
<accession>P61501</accession>
<accession>P48297</accession>
<accession>Q9AGJ9</accession>
<sequence>MDESKRKALENALKAIEKEFGKGAVMRLGEMPKQQVDVIPTGSLALDLALGIGGIPRGRIVEIYGPESGGKTTLALTIIAQAQRRGGVAAFVDAEHALDPLYAQRLGVQVEDLLVSQPDTGEQALEIVELLARSGAVDVIVVDSVAALVPGAEIEGEMGDQHVGLQARLMSQALRKLTAVLAKSNTAAIFINQVREKVGVTYGNPETTPGGRALKFYASVRLDVRKSGQPIKVGNEAVGVKVRVKVVKNKLAPPFREAELEIYFGRGLDPVADLVNVAVAAGVIEKAGSWFSYGELRLGQGKEKAAEALRERPELLEEIRAKVLERSDQVVLAAGEDEGE</sequence>
<name>RECA_THETH</name>
<feature type="chain" id="PRO_0000122882" description="Protein RecA">
    <location>
        <begin position="1"/>
        <end position="340"/>
    </location>
</feature>
<feature type="binding site" evidence="1">
    <location>
        <begin position="65"/>
        <end position="72"/>
    </location>
    <ligand>
        <name>ATP</name>
        <dbReference type="ChEBI" id="CHEBI:30616"/>
    </ligand>
</feature>
<comment type="function">
    <text evidence="1">Can catalyze the hydrolysis of ATP in the presence of single-stranded DNA, the ATP-dependent uptake of single-stranded DNA by duplex DNA, and the ATP-dependent hybridization of homologous single-stranded DNAs. It interacts with LexA causing its activation and leading to its autocatalytic cleavage.</text>
</comment>
<comment type="subcellular location">
    <subcellularLocation>
        <location evidence="1">Cytoplasm</location>
    </subcellularLocation>
</comment>
<comment type="similarity">
    <text evidence="1">Belongs to the RecA family.</text>
</comment>
<proteinExistence type="inferred from homology"/>